<sequence>MGGPGLYSGIGKKAKDLLYRDYQTDHKFTLTTYTANGPAITATSTKKADLTVGEIQSQIKNKNITVDVKANSASNVITTITADDLAAPGLKTILSFAVPDQKSGKVELQYLHDYAGINASIGLTANPVVNLSGAFGTSALAVGADVSLDTATKNFAKYNAALSYTNQDLIASLNLNNKGDSLTASYYHIVEKSGTAVGAELTHSFSSNENSLTFGTQHTLDPLTLVKARINNSGKASALIQHEFMPKSLCTISAEVDTKAIEKSSKVGIAIALKP</sequence>
<keyword id="KW-0406">Ion transport</keyword>
<keyword id="KW-0472">Membrane</keyword>
<keyword id="KW-0496">Mitochondrion</keyword>
<keyword id="KW-1000">Mitochondrion outer membrane</keyword>
<keyword id="KW-0626">Porin</keyword>
<keyword id="KW-1185">Reference proteome</keyword>
<keyword id="KW-0812">Transmembrane</keyword>
<keyword id="KW-1134">Transmembrane beta strand</keyword>
<keyword id="KW-0813">Transport</keyword>
<proteinExistence type="evidence at transcript level"/>
<accession>P46274</accession>
<gene>
    <name type="primary">VDAC1</name>
</gene>
<protein>
    <recommendedName>
        <fullName>Mitochondrial outer membrane porin</fullName>
    </recommendedName>
    <alternativeName>
        <fullName>Voltage-dependent anion-selective channel protein</fullName>
        <shortName>VDAC</shortName>
    </alternativeName>
</protein>
<evidence type="ECO:0000250" key="1"/>
<evidence type="ECO:0000305" key="2"/>
<feature type="chain" id="PRO_0000050533" description="Mitochondrial outer membrane porin">
    <location>
        <begin position="1"/>
        <end position="275"/>
    </location>
</feature>
<name>VDAC1_WHEAT</name>
<comment type="function">
    <text evidence="1">Forms a channel through the cell membrane that allows diffusion of small hydrophilic molecules. The channel adopts an open conformation at low or zero membrane potential and a closed conformation at potentials above 30-40 mV. The open state has a weak anion selectivity whereas the closed state is cation-selective (By similarity).</text>
</comment>
<comment type="subcellular location">
    <subcellularLocation>
        <location>Mitochondrion outer membrane</location>
    </subcellularLocation>
</comment>
<comment type="domain">
    <text>Consists mainly of membrane-spanning sided beta-sheets.</text>
</comment>
<comment type="similarity">
    <text evidence="2">Belongs to the eukaryotic mitochondrial porin (TC 1.B.8.1) family.</text>
</comment>
<reference key="1">
    <citation type="journal article" date="1995" name="Plant Mol. Biol.">
        <title>Multiple cDNAs of wheat voltage-dependent anion channels (VDAC): isolation, differential expression, mapping and evolution.</title>
        <authorList>
            <person name="Elkeles A."/>
            <person name="Devos K.M."/>
            <person name="Graur D."/>
            <person name="Zizi M."/>
            <person name="Breiman A."/>
        </authorList>
    </citation>
    <scope>NUCLEOTIDE SEQUENCE [MRNA]</scope>
    <source>
        <strain>cv. Atir</strain>
        <tissue>Root</tissue>
    </source>
</reference>
<organism>
    <name type="scientific">Triticum aestivum</name>
    <name type="common">Wheat</name>
    <dbReference type="NCBI Taxonomy" id="4565"/>
    <lineage>
        <taxon>Eukaryota</taxon>
        <taxon>Viridiplantae</taxon>
        <taxon>Streptophyta</taxon>
        <taxon>Embryophyta</taxon>
        <taxon>Tracheophyta</taxon>
        <taxon>Spermatophyta</taxon>
        <taxon>Magnoliopsida</taxon>
        <taxon>Liliopsida</taxon>
        <taxon>Poales</taxon>
        <taxon>Poaceae</taxon>
        <taxon>BOP clade</taxon>
        <taxon>Pooideae</taxon>
        <taxon>Triticodae</taxon>
        <taxon>Triticeae</taxon>
        <taxon>Triticinae</taxon>
        <taxon>Triticum</taxon>
    </lineage>
</organism>
<dbReference type="EMBL" id="X77733">
    <property type="protein sequence ID" value="CAA54788.1"/>
    <property type="molecule type" value="mRNA"/>
</dbReference>
<dbReference type="PIR" id="S59545">
    <property type="entry name" value="S59545"/>
</dbReference>
<dbReference type="SMR" id="P46274"/>
<dbReference type="STRING" id="4565.P46274"/>
<dbReference type="TCDB" id="1.B.8.1.4">
    <property type="family name" value="the mitochondrial and plastid porin (mpp) family"/>
</dbReference>
<dbReference type="PaxDb" id="4565-Traes_5DL_469B4E877.1"/>
<dbReference type="eggNOG" id="KOG1223">
    <property type="taxonomic scope" value="Eukaryota"/>
</dbReference>
<dbReference type="eggNOG" id="KOG3126">
    <property type="taxonomic scope" value="Eukaryota"/>
</dbReference>
<dbReference type="Proteomes" id="UP000019116">
    <property type="component" value="Unplaced"/>
</dbReference>
<dbReference type="ExpressionAtlas" id="P46274">
    <property type="expression patterns" value="baseline and differential"/>
</dbReference>
<dbReference type="GO" id="GO:0005741">
    <property type="term" value="C:mitochondrial outer membrane"/>
    <property type="evidence" value="ECO:0000318"/>
    <property type="project" value="GO_Central"/>
</dbReference>
<dbReference type="GO" id="GO:0046930">
    <property type="term" value="C:pore complex"/>
    <property type="evidence" value="ECO:0007669"/>
    <property type="project" value="UniProtKB-KW"/>
</dbReference>
<dbReference type="GO" id="GO:0015288">
    <property type="term" value="F:porin activity"/>
    <property type="evidence" value="ECO:0007669"/>
    <property type="project" value="UniProtKB-KW"/>
</dbReference>
<dbReference type="GO" id="GO:0008308">
    <property type="term" value="F:voltage-gated monoatomic anion channel activity"/>
    <property type="evidence" value="ECO:0000318"/>
    <property type="project" value="GO_Central"/>
</dbReference>
<dbReference type="CDD" id="cd07306">
    <property type="entry name" value="Porin3_VDAC"/>
    <property type="match status" value="1"/>
</dbReference>
<dbReference type="FunFam" id="2.40.160.10:FF:000003">
    <property type="entry name" value="Outer mitochondrial membrane protein porin"/>
    <property type="match status" value="1"/>
</dbReference>
<dbReference type="Gene3D" id="2.40.160.10">
    <property type="entry name" value="Porin"/>
    <property type="match status" value="1"/>
</dbReference>
<dbReference type="InterPro" id="IPR023614">
    <property type="entry name" value="Porin_dom_sf"/>
</dbReference>
<dbReference type="InterPro" id="IPR001925">
    <property type="entry name" value="Porin_Euk"/>
</dbReference>
<dbReference type="InterPro" id="IPR027246">
    <property type="entry name" value="Porin_Euk/Tom40"/>
</dbReference>
<dbReference type="PANTHER" id="PTHR11743:SF70">
    <property type="entry name" value="GH26960P-RELATED"/>
    <property type="match status" value="1"/>
</dbReference>
<dbReference type="PANTHER" id="PTHR11743">
    <property type="entry name" value="VOLTAGE-DEPENDENT ANION-SELECTIVE CHANNEL"/>
    <property type="match status" value="1"/>
</dbReference>
<dbReference type="Pfam" id="PF01459">
    <property type="entry name" value="Porin_3"/>
    <property type="match status" value="1"/>
</dbReference>
<dbReference type="PROSITE" id="PS00558">
    <property type="entry name" value="EUKARYOTIC_PORIN"/>
    <property type="match status" value="1"/>
</dbReference>